<sequence>MKLKERLAELIPQWRAEVAEIRKKYGNRKTMDCTIGHAYGGMRGLKALVCDTSEVFPDEGVKFRGYTIPELREGPHKLPTAEGGFEPLPEGLWYLLLTGELPTEEDVKEISAEFTKRMQNVPQYVFDVLRAMPVDTHPMTMFAAGILAMQRESVFAKRYEEGMRREEHWEAMLEDSLNMLAALPVIAAYIYRRKYKGDTHIAPDPNLDWSANLAHMMGFDDFEVYELFRLYMFLHSDHEGGNVSAHTNLLVNSAYSDIYRSFSAAMNGLAGPLHGLANQEVLRWIQMLYKKFGGVPTKEQLERFAWDTLNSGQVIPGYGHAVLRVTDPRYVAQRDFALKHLPDDELFKIVSLCYEVIPEVLKKHGKAKNPWPNVDAHSGVLLWHYGIREYDFYTVLFGVSRALGCTAQAILVRGYMLPIERPKSITTRWVKEVAESLPVAGS</sequence>
<accession>A0A0S3QTD0</accession>
<feature type="chain" id="PRO_0000443956" description="Citrate synthase">
    <location>
        <begin position="1"/>
        <end position="442"/>
    </location>
</feature>
<feature type="active site" evidence="1">
    <location>
        <position position="274"/>
    </location>
</feature>
<feature type="active site" evidence="1">
    <location>
        <position position="320"/>
    </location>
</feature>
<feature type="active site" evidence="1">
    <location>
        <position position="375"/>
    </location>
</feature>
<dbReference type="EC" id="2.3.3.16" evidence="2"/>
<dbReference type="EMBL" id="AP013035">
    <property type="protein sequence ID" value="BAT71583.1"/>
    <property type="molecule type" value="Genomic_DNA"/>
</dbReference>
<dbReference type="RefSeq" id="WP_068549585.1">
    <property type="nucleotide sequence ID" value="NZ_AP013035.1"/>
</dbReference>
<dbReference type="PDB" id="8XXD">
    <property type="method" value="X-ray"/>
    <property type="resolution" value="2.32 A"/>
    <property type="chains" value="A/B/C=1-442"/>
</dbReference>
<dbReference type="PDB" id="8XXE">
    <property type="method" value="X-ray"/>
    <property type="resolution" value="2.08 A"/>
    <property type="chains" value="A/B/C=1-442"/>
</dbReference>
<dbReference type="PDB" id="8XXF">
    <property type="method" value="X-ray"/>
    <property type="resolution" value="2.33 A"/>
    <property type="chains" value="A/B/C/D/E/F=1-442"/>
</dbReference>
<dbReference type="PDBsum" id="8XXD"/>
<dbReference type="PDBsum" id="8XXE"/>
<dbReference type="PDBsum" id="8XXF"/>
<dbReference type="SMR" id="A0A0S3QTD0"/>
<dbReference type="STRING" id="1298851.TST_0783"/>
<dbReference type="KEGG" id="ttk:TST_0783"/>
<dbReference type="PATRIC" id="fig|1298851.3.peg.818"/>
<dbReference type="OrthoDB" id="9800864at2"/>
<dbReference type="SABIO-RK" id="A0A0S3QTD0"/>
<dbReference type="UniPathway" id="UPA00223">
    <property type="reaction ID" value="UER00717"/>
</dbReference>
<dbReference type="Proteomes" id="UP000063234">
    <property type="component" value="Chromosome"/>
</dbReference>
<dbReference type="GO" id="GO:0004108">
    <property type="term" value="F:citrate (Si)-synthase activity"/>
    <property type="evidence" value="ECO:0007669"/>
    <property type="project" value="TreeGrafter"/>
</dbReference>
<dbReference type="GO" id="GO:0005975">
    <property type="term" value="P:carbohydrate metabolic process"/>
    <property type="evidence" value="ECO:0007669"/>
    <property type="project" value="TreeGrafter"/>
</dbReference>
<dbReference type="GO" id="GO:0006099">
    <property type="term" value="P:tricarboxylic acid cycle"/>
    <property type="evidence" value="ECO:0007669"/>
    <property type="project" value="UniProtKB-UniPathway"/>
</dbReference>
<dbReference type="FunFam" id="1.10.230.10:FF:000001">
    <property type="entry name" value="Citrate synthase"/>
    <property type="match status" value="1"/>
</dbReference>
<dbReference type="Gene3D" id="1.10.580.10">
    <property type="entry name" value="Citrate Synthase, domain 1"/>
    <property type="match status" value="1"/>
</dbReference>
<dbReference type="Gene3D" id="1.10.230.10">
    <property type="entry name" value="Cytochrome P450-Terp, domain 2"/>
    <property type="match status" value="1"/>
</dbReference>
<dbReference type="InterPro" id="IPR016142">
    <property type="entry name" value="Citrate_synth-like_lrg_a-sub"/>
</dbReference>
<dbReference type="InterPro" id="IPR016143">
    <property type="entry name" value="Citrate_synth-like_sm_a-sub"/>
</dbReference>
<dbReference type="InterPro" id="IPR002020">
    <property type="entry name" value="Citrate_synthase"/>
</dbReference>
<dbReference type="InterPro" id="IPR019810">
    <property type="entry name" value="Citrate_synthase_AS"/>
</dbReference>
<dbReference type="InterPro" id="IPR036969">
    <property type="entry name" value="Citrate_synthase_sf"/>
</dbReference>
<dbReference type="NCBIfam" id="NF007128">
    <property type="entry name" value="PRK09569.1"/>
    <property type="match status" value="1"/>
</dbReference>
<dbReference type="PANTHER" id="PTHR11739">
    <property type="entry name" value="CITRATE SYNTHASE"/>
    <property type="match status" value="1"/>
</dbReference>
<dbReference type="PANTHER" id="PTHR11739:SF8">
    <property type="entry name" value="CITRATE SYNTHASE, MITOCHONDRIAL"/>
    <property type="match status" value="1"/>
</dbReference>
<dbReference type="Pfam" id="PF00285">
    <property type="entry name" value="Citrate_synt"/>
    <property type="match status" value="1"/>
</dbReference>
<dbReference type="PRINTS" id="PR00143">
    <property type="entry name" value="CITRTSNTHASE"/>
</dbReference>
<dbReference type="SUPFAM" id="SSF48256">
    <property type="entry name" value="Citrate synthase"/>
    <property type="match status" value="1"/>
</dbReference>
<dbReference type="PROSITE" id="PS00480">
    <property type="entry name" value="CITRATE_SYNTHASE"/>
    <property type="match status" value="1"/>
</dbReference>
<organism>
    <name type="scientific">Thermosulfidibacter takaii (strain DSM 17441 / JCM 13301 / NBRC 103674 / ABI70S6)</name>
    <dbReference type="NCBI Taxonomy" id="1298851"/>
    <lineage>
        <taxon>Bacteria</taxon>
        <taxon>Pseudomonadati</taxon>
        <taxon>Thermosulfidibacterota</taxon>
        <taxon>Thermosulfidibacteria</taxon>
        <taxon>Thermosulfidibacterales</taxon>
        <taxon>Thermosulfidibacteraceae</taxon>
    </lineage>
</organism>
<proteinExistence type="evidence at protein level"/>
<protein>
    <recommendedName>
        <fullName evidence="3">Citrate synthase</fullName>
        <shortName evidence="3">CS</shortName>
        <ecNumber evidence="2">2.3.3.16</ecNumber>
    </recommendedName>
</protein>
<gene>
    <name evidence="5" type="primary">gltA</name>
    <name evidence="5" type="ORF">TST_0783</name>
</gene>
<keyword id="KW-0002">3D-structure</keyword>
<keyword id="KW-1185">Reference proteome</keyword>
<keyword id="KW-0808">Transferase</keyword>
<keyword id="KW-0816">Tricarboxylic acid cycle</keyword>
<name>CISY_THET7</name>
<evidence type="ECO:0000250" key="1">
    <source>
        <dbReference type="UniProtKB" id="P21553"/>
    </source>
</evidence>
<evidence type="ECO:0000269" key="2">
    <source>
    </source>
</evidence>
<evidence type="ECO:0000303" key="3">
    <source>
    </source>
</evidence>
<evidence type="ECO:0000305" key="4"/>
<evidence type="ECO:0000312" key="5">
    <source>
        <dbReference type="EMBL" id="BAT71583.1"/>
    </source>
</evidence>
<comment type="function">
    <text evidence="2">Catalyzes both citrate generation and citrate cleavage. Part of a reversible tricarboxylic acid (TCA) cycle that can fix carbon dioxide autotrophically and may represent an ancestral mode of the conventional reductive TCA (rTCA) cycle. The direction is controlled by the available carbon source(s).</text>
</comment>
<comment type="catalytic activity">
    <reaction evidence="2">
        <text>oxaloacetate + acetyl-CoA + H2O = citrate + CoA + H(+)</text>
        <dbReference type="Rhea" id="RHEA:16845"/>
        <dbReference type="ChEBI" id="CHEBI:15377"/>
        <dbReference type="ChEBI" id="CHEBI:15378"/>
        <dbReference type="ChEBI" id="CHEBI:16452"/>
        <dbReference type="ChEBI" id="CHEBI:16947"/>
        <dbReference type="ChEBI" id="CHEBI:57287"/>
        <dbReference type="ChEBI" id="CHEBI:57288"/>
        <dbReference type="EC" id="2.3.3.16"/>
    </reaction>
    <physiologicalReaction direction="left-to-right" evidence="2">
        <dbReference type="Rhea" id="RHEA:16846"/>
    </physiologicalReaction>
    <physiologicalReaction direction="right-to-left" evidence="2">
        <dbReference type="Rhea" id="RHEA:16847"/>
    </physiologicalReaction>
</comment>
<comment type="biophysicochemical properties">
    <kinetics>
        <KM evidence="2">8.6 uM for citrate</KM>
        <KM evidence="2">17.4 uM for CoA</KM>
        <KM evidence="2">41.2 uM for oxaloacetate</KM>
        <KM evidence="2">56.3 uM for acetyl-CoA</KM>
        <Vmax evidence="2">1.11 umol/min/mg enzyme toward citrate for the reverse reaction</Vmax>
        <Vmax evidence="2">1.6 umol/min/mg enzyme toward CoA for the reverse reaction</Vmax>
        <Vmax evidence="2">298.0 umol/min/mg enzyme toward acetyl-CoA for the forward reaction</Vmax>
        <text evidence="2">kcat is 0.931 sec(-1) with citrate as substrate. kcat is 1.34 sec(-1) with CoA as substrate. kcat is 250 sec(-1) with acetyl-CoA as substrate.</text>
    </kinetics>
</comment>
<comment type="pathway">
    <text evidence="2">Carbohydrate metabolism; tricarboxylic acid cycle; isocitrate from oxaloacetate: step 1/2.</text>
</comment>
<comment type="similarity">
    <text evidence="4">Belongs to the citrate synthase family.</text>
</comment>
<reference key="1">
    <citation type="journal article" date="2018" name="Science">
        <title>A primordial and reversible TCA cycle in a facultatively chemolithoautotrophic thermophile.</title>
        <authorList>
            <person name="Nunoura T."/>
            <person name="Chikaraishi Y."/>
            <person name="Izaki R."/>
            <person name="Suwa T."/>
            <person name="Sato T."/>
            <person name="Harada T."/>
            <person name="Mori K."/>
            <person name="Kato Y."/>
            <person name="Miyazaki M."/>
            <person name="Shimamura S."/>
            <person name="Yanagawa K."/>
            <person name="Shuto A."/>
            <person name="Ohkouchi N."/>
            <person name="Fujita N."/>
            <person name="Takaki Y."/>
            <person name="Atomi H."/>
            <person name="Takai K."/>
        </authorList>
    </citation>
    <scope>NUCLEOTIDE SEQUENCE [LARGE SCALE GENOMIC DNA]</scope>
    <scope>FUNCTION</scope>
    <scope>CATALYTIC ACTIVITY</scope>
    <scope>BIOPHYSICOCHEMICAL PROPERTIES</scope>
    <scope>PATHWAY</scope>
    <source>
        <strain>DSM 17441 / JCM 13301 / NBRC 103674 / ABI70S6</strain>
    </source>
</reference>